<name>MUTL_LISMC</name>
<organism>
    <name type="scientific">Listeria monocytogenes serotype 4b (strain CLIP80459)</name>
    <dbReference type="NCBI Taxonomy" id="568819"/>
    <lineage>
        <taxon>Bacteria</taxon>
        <taxon>Bacillati</taxon>
        <taxon>Bacillota</taxon>
        <taxon>Bacilli</taxon>
        <taxon>Bacillales</taxon>
        <taxon>Listeriaceae</taxon>
        <taxon>Listeria</taxon>
    </lineage>
</organism>
<protein>
    <recommendedName>
        <fullName evidence="1">DNA mismatch repair protein MutL</fullName>
    </recommendedName>
</protein>
<reference key="1">
    <citation type="journal article" date="2012" name="BMC Genomics">
        <title>Comparative genomics and transcriptomics of lineages I, II, and III strains of Listeria monocytogenes.</title>
        <authorList>
            <person name="Hain T."/>
            <person name="Ghai R."/>
            <person name="Billion A."/>
            <person name="Kuenne C.T."/>
            <person name="Steinweg C."/>
            <person name="Izar B."/>
            <person name="Mohamed W."/>
            <person name="Mraheil M."/>
            <person name="Domann E."/>
            <person name="Schaffrath S."/>
            <person name="Karst U."/>
            <person name="Goesmann A."/>
            <person name="Oehm S."/>
            <person name="Puhler A."/>
            <person name="Merkl R."/>
            <person name="Vorwerk S."/>
            <person name="Glaser P."/>
            <person name="Garrido P."/>
            <person name="Rusniok C."/>
            <person name="Buchrieser C."/>
            <person name="Goebel W."/>
            <person name="Chakraborty T."/>
        </authorList>
    </citation>
    <scope>NUCLEOTIDE SEQUENCE [LARGE SCALE GENOMIC DNA]</scope>
    <source>
        <strain>CLIP80459</strain>
    </source>
</reference>
<feature type="chain" id="PRO_1000203392" description="DNA mismatch repair protein MutL">
    <location>
        <begin position="1"/>
        <end position="603"/>
    </location>
</feature>
<feature type="region of interest" description="Disordered" evidence="2">
    <location>
        <begin position="361"/>
        <end position="383"/>
    </location>
</feature>
<gene>
    <name evidence="1" type="primary">mutL</name>
    <name type="ordered locus">Lm4b_01413</name>
</gene>
<sequence>MAKHIVELTDALSNKIAAGEVVERPASVVKELVENAIDAGSTVIDILVEEAGLNKITIIDNGSGIEEEDVATAFLRHATSKIKNEADLFRVHTLGFRGEALPSIASVSHLEMETSTGEAKGTTISLEGGKIIEQKSGHARKGTQIEVSQLFFNTPARLKYLKSLPTELGNITDILNRLALAHPDISFRFSHNGKPLLQTNGNGDLRQVIAAIYGVSIAKKSVPVKAESLDFKISGYAVLPEVNRSNRNYISTIINGRFIKNFALVKAIQEGYHTLLPIGRFPIIVLQIEMDPIIVDVNVHPAKLEVRLSKEKELGQLISQMIKETFHKLQLIPDGEISKKQKEDQKSEQIQISFEEKKPVKETPTLFSKPTIPEYVPSDEDAPREDDFILETMPSYEPESQAEQEEHTKERIPKMYPIGQMHATYIFAQNENGLYIIDQHAAQERIKYEFYREKIGEVSRELQELLVPIVLEFPADEYVRLEEQKAKLEEVGVFLENFGQNSFIIRAHPTWFPKDQEEEMLREIIDEALSAPSISIHKLREDTAIMMSCKKSIKANHYLTTQDMEALLDTLREASDPFTCPHGRPVIIQYSTYELEKMFKRVM</sequence>
<comment type="function">
    <text evidence="1">This protein is involved in the repair of mismatches in DNA. It is required for dam-dependent methyl-directed DNA mismatch repair. May act as a 'molecular matchmaker', a protein that promotes the formation of a stable complex between two or more DNA-binding proteins in an ATP-dependent manner without itself being part of a final effector complex.</text>
</comment>
<comment type="similarity">
    <text evidence="1">Belongs to the DNA mismatch repair MutL/HexB family.</text>
</comment>
<accession>C1L2W0</accession>
<keyword id="KW-0227">DNA damage</keyword>
<keyword id="KW-0234">DNA repair</keyword>
<proteinExistence type="inferred from homology"/>
<dbReference type="EMBL" id="FM242711">
    <property type="protein sequence ID" value="CAS05176.1"/>
    <property type="molecule type" value="Genomic_DNA"/>
</dbReference>
<dbReference type="RefSeq" id="WP_012681288.1">
    <property type="nucleotide sequence ID" value="NC_012488.1"/>
</dbReference>
<dbReference type="SMR" id="C1L2W0"/>
<dbReference type="KEGG" id="lmc:Lm4b_01413"/>
<dbReference type="HOGENOM" id="CLU_004131_4_1_9"/>
<dbReference type="GO" id="GO:0032300">
    <property type="term" value="C:mismatch repair complex"/>
    <property type="evidence" value="ECO:0007669"/>
    <property type="project" value="InterPro"/>
</dbReference>
<dbReference type="GO" id="GO:0005524">
    <property type="term" value="F:ATP binding"/>
    <property type="evidence" value="ECO:0007669"/>
    <property type="project" value="InterPro"/>
</dbReference>
<dbReference type="GO" id="GO:0016887">
    <property type="term" value="F:ATP hydrolysis activity"/>
    <property type="evidence" value="ECO:0007669"/>
    <property type="project" value="InterPro"/>
</dbReference>
<dbReference type="GO" id="GO:0140664">
    <property type="term" value="F:ATP-dependent DNA damage sensor activity"/>
    <property type="evidence" value="ECO:0007669"/>
    <property type="project" value="InterPro"/>
</dbReference>
<dbReference type="GO" id="GO:0030983">
    <property type="term" value="F:mismatched DNA binding"/>
    <property type="evidence" value="ECO:0007669"/>
    <property type="project" value="InterPro"/>
</dbReference>
<dbReference type="GO" id="GO:0006298">
    <property type="term" value="P:mismatch repair"/>
    <property type="evidence" value="ECO:0007669"/>
    <property type="project" value="UniProtKB-UniRule"/>
</dbReference>
<dbReference type="CDD" id="cd16926">
    <property type="entry name" value="HATPase_MutL-MLH-PMS-like"/>
    <property type="match status" value="1"/>
</dbReference>
<dbReference type="CDD" id="cd00782">
    <property type="entry name" value="MutL_Trans"/>
    <property type="match status" value="1"/>
</dbReference>
<dbReference type="FunFam" id="3.30.1370.100:FF:000004">
    <property type="entry name" value="DNA mismatch repair endonuclease MutL"/>
    <property type="match status" value="1"/>
</dbReference>
<dbReference type="FunFam" id="3.30.230.10:FF:000036">
    <property type="entry name" value="DNA mismatch repair endonuclease MutL"/>
    <property type="match status" value="1"/>
</dbReference>
<dbReference type="FunFam" id="3.30.565.10:FF:000003">
    <property type="entry name" value="DNA mismatch repair endonuclease MutL"/>
    <property type="match status" value="1"/>
</dbReference>
<dbReference type="Gene3D" id="3.30.230.10">
    <property type="match status" value="1"/>
</dbReference>
<dbReference type="Gene3D" id="3.30.565.10">
    <property type="entry name" value="Histidine kinase-like ATPase, C-terminal domain"/>
    <property type="match status" value="1"/>
</dbReference>
<dbReference type="Gene3D" id="3.30.1540.20">
    <property type="entry name" value="MutL, C-terminal domain, dimerisation subdomain"/>
    <property type="match status" value="1"/>
</dbReference>
<dbReference type="Gene3D" id="3.30.1370.100">
    <property type="entry name" value="MutL, C-terminal domain, regulatory subdomain"/>
    <property type="match status" value="1"/>
</dbReference>
<dbReference type="HAMAP" id="MF_00149">
    <property type="entry name" value="DNA_mis_repair"/>
    <property type="match status" value="1"/>
</dbReference>
<dbReference type="InterPro" id="IPR014762">
    <property type="entry name" value="DNA_mismatch_repair_CS"/>
</dbReference>
<dbReference type="InterPro" id="IPR020667">
    <property type="entry name" value="DNA_mismatch_repair_MutL"/>
</dbReference>
<dbReference type="InterPro" id="IPR013507">
    <property type="entry name" value="DNA_mismatch_S5_2-like"/>
</dbReference>
<dbReference type="InterPro" id="IPR036890">
    <property type="entry name" value="HATPase_C_sf"/>
</dbReference>
<dbReference type="InterPro" id="IPR002099">
    <property type="entry name" value="MutL/Mlh/PMS"/>
</dbReference>
<dbReference type="InterPro" id="IPR038973">
    <property type="entry name" value="MutL/Mlh/Pms-like"/>
</dbReference>
<dbReference type="InterPro" id="IPR014790">
    <property type="entry name" value="MutL_C"/>
</dbReference>
<dbReference type="InterPro" id="IPR042120">
    <property type="entry name" value="MutL_C_dimsub"/>
</dbReference>
<dbReference type="InterPro" id="IPR042121">
    <property type="entry name" value="MutL_C_regsub"/>
</dbReference>
<dbReference type="InterPro" id="IPR037198">
    <property type="entry name" value="MutL_C_sf"/>
</dbReference>
<dbReference type="InterPro" id="IPR020568">
    <property type="entry name" value="Ribosomal_Su5_D2-typ_SF"/>
</dbReference>
<dbReference type="InterPro" id="IPR014721">
    <property type="entry name" value="Ribsml_uS5_D2-typ_fold_subgr"/>
</dbReference>
<dbReference type="NCBIfam" id="TIGR00585">
    <property type="entry name" value="mutl"/>
    <property type="match status" value="1"/>
</dbReference>
<dbReference type="PANTHER" id="PTHR10073">
    <property type="entry name" value="DNA MISMATCH REPAIR PROTEIN MLH, PMS, MUTL"/>
    <property type="match status" value="1"/>
</dbReference>
<dbReference type="PANTHER" id="PTHR10073:SF12">
    <property type="entry name" value="DNA MISMATCH REPAIR PROTEIN MLH1"/>
    <property type="match status" value="1"/>
</dbReference>
<dbReference type="Pfam" id="PF01119">
    <property type="entry name" value="DNA_mis_repair"/>
    <property type="match status" value="1"/>
</dbReference>
<dbReference type="Pfam" id="PF13589">
    <property type="entry name" value="HATPase_c_3"/>
    <property type="match status" value="1"/>
</dbReference>
<dbReference type="Pfam" id="PF08676">
    <property type="entry name" value="MutL_C"/>
    <property type="match status" value="1"/>
</dbReference>
<dbReference type="SMART" id="SM01340">
    <property type="entry name" value="DNA_mis_repair"/>
    <property type="match status" value="1"/>
</dbReference>
<dbReference type="SMART" id="SM00853">
    <property type="entry name" value="MutL_C"/>
    <property type="match status" value="1"/>
</dbReference>
<dbReference type="SUPFAM" id="SSF55874">
    <property type="entry name" value="ATPase domain of HSP90 chaperone/DNA topoisomerase II/histidine kinase"/>
    <property type="match status" value="1"/>
</dbReference>
<dbReference type="SUPFAM" id="SSF118116">
    <property type="entry name" value="DNA mismatch repair protein MutL"/>
    <property type="match status" value="1"/>
</dbReference>
<dbReference type="SUPFAM" id="SSF54211">
    <property type="entry name" value="Ribosomal protein S5 domain 2-like"/>
    <property type="match status" value="1"/>
</dbReference>
<dbReference type="PROSITE" id="PS00058">
    <property type="entry name" value="DNA_MISMATCH_REPAIR_1"/>
    <property type="match status" value="1"/>
</dbReference>
<evidence type="ECO:0000255" key="1">
    <source>
        <dbReference type="HAMAP-Rule" id="MF_00149"/>
    </source>
</evidence>
<evidence type="ECO:0000256" key="2">
    <source>
        <dbReference type="SAM" id="MobiDB-lite"/>
    </source>
</evidence>